<gene>
    <name type="primary">slf2</name>
</gene>
<evidence type="ECO:0000250" key="1">
    <source>
        <dbReference type="UniProtKB" id="Q8IX21"/>
    </source>
</evidence>
<evidence type="ECO:0000256" key="2">
    <source>
        <dbReference type="SAM" id="MobiDB-lite"/>
    </source>
</evidence>
<evidence type="ECO:0000269" key="3">
    <source>
    </source>
</evidence>
<evidence type="ECO:0000305" key="4"/>
<name>SLF2_DANRE</name>
<proteinExistence type="inferred from homology"/>
<comment type="function">
    <text evidence="1">Plays a role in the DNA damage response (DDR) pathway by regulating postreplication repair of UV-damaged DNA and genomic stability maintenance. Promotes the recruitment of the SMC5-SMC6 complex to DNA lesions.</text>
</comment>
<comment type="subcellular location">
    <subcellularLocation>
        <location evidence="1">Nucleus</location>
    </subcellularLocation>
</comment>
<comment type="disruption phenotype">
    <text evidence="3">Slf2 depletion in zebrafish embryos using CRISPR/Cas9-mediated genome editing or morpholino gene knockdown results in a significant reduction in head size and aberrant craniofacial patterning in the pharyngeal skeleton.</text>
</comment>
<comment type="similarity">
    <text evidence="4">Belongs to the FAM178 family.</text>
</comment>
<sequence>MNSTVVVKRLQPNNGNINPRNNCSLSSMDKKNLLQKSSSYNRNRDISYALCKELNENLRVRGGLFQSESAVKARRHTLPHSSHRRSPERRNSLLFQQRPRNSSGQFTHNPNQKKDRMDNRDHKTSIKKELNNLNTMTSPEGRLSLSAKRKSEASTGSERETKRPRVDIQATSSSSILNSPPKFIRRAFLKSCNESVITIKETNSPIKPSISDNKPKLSSSLPRQLFCADSNAHSSQTTKSPTNAEPKDAMVARANKNPKAPPSQPHLRKVSPKSSMTFDSIETHFTPDNCASVAKMSKKTNGETEIIALSTNTSSSSHYKESVTGRSSPHQHDLSSTSFTEQASSCKMELDERAPMKAEQSRSPEAIPAVTVKVEGSGEHKCFPQWKDPLDIELGDDWDDELREHCVISLSSSSSSHEDEQLPSLKEILDWTVRVPVTPEKDAYSEPNTPVLKAVPEAVKTKATSYRNTLEQMLQEKEQYQRSKELERQLLESCEEDLMNLDEDENSESKGEDISLEHREILQRFSVTSCAIRDIHPGEEIFTPAKFGQLFNHQTLDLRKISVTPHNRSQQILLQARSEHVLSLISAGLLRKAYFSFPCQPEVTRWLFQMTSVHPNPIISSRIMQSLHTIALSAAQHIVEHKSQSFTVWVPSIRDITQVFLNMGASFISLFPLDVLQPPFTEGDLLEDFKPEENSQDSAISEIKDDATLPVHNLESVLSYLSLCTALCPKAYTDEELLLLLAVVCRIGLETHFQLLPTGSFSLLLQNVLKNITDWDVQISKACQILTDLSEDHHNLRRIVSILPESSRGKLLKRHLSVSIISKLLNHTCTYNPSGTDFKLSELKPFLPQMRPSSLLKSLSSARGSEDCDATLDQQAYYLCYSLLTLTNEASNFEFLPSAQRNDLRCLSSLLEKHIKCDIRESEKMLYRSKVKDFVARIYTKWQVLLTRTRPQEGMLYDYWKPPPEDELPSSPQGQTCIKAQDPQESPEEAPTPEWSSSESEEDDQSKDEEEEDWLKDPDNLQPLENQVKMEQSAEDCVEDVSDAEEESDVPKQQLEGFDISGALEDISEEELFEDDEDLLNEEEKQLLKDEEDRKHRPVEEASQQIEDLLAKHKDTLEMKDGMLLDAFI</sequence>
<organism>
    <name type="scientific">Danio rerio</name>
    <name type="common">Zebrafish</name>
    <name type="synonym">Brachydanio rerio</name>
    <dbReference type="NCBI Taxonomy" id="7955"/>
    <lineage>
        <taxon>Eukaryota</taxon>
        <taxon>Metazoa</taxon>
        <taxon>Chordata</taxon>
        <taxon>Craniata</taxon>
        <taxon>Vertebrata</taxon>
        <taxon>Euteleostomi</taxon>
        <taxon>Actinopterygii</taxon>
        <taxon>Neopterygii</taxon>
        <taxon>Teleostei</taxon>
        <taxon>Ostariophysi</taxon>
        <taxon>Cypriniformes</taxon>
        <taxon>Danionidae</taxon>
        <taxon>Danioninae</taxon>
        <taxon>Danio</taxon>
    </lineage>
</organism>
<dbReference type="EMBL" id="CR848040">
    <property type="status" value="NOT_ANNOTATED_CDS"/>
    <property type="molecule type" value="Genomic_DNA"/>
</dbReference>
<dbReference type="EMBL" id="CT956029">
    <property type="status" value="NOT_ANNOTATED_CDS"/>
    <property type="molecule type" value="Genomic_DNA"/>
</dbReference>
<dbReference type="RefSeq" id="XP_005156665.1">
    <property type="nucleotide sequence ID" value="XM_005156608.5"/>
</dbReference>
<dbReference type="SMR" id="F1QB81"/>
<dbReference type="STRING" id="7955.ENSDARP00000118459"/>
<dbReference type="PaxDb" id="7955-ENSDARP00000058064"/>
<dbReference type="Ensembl" id="ENSDART00000136689">
    <property type="protein sequence ID" value="ENSDARP00000118459"/>
    <property type="gene ID" value="ENSDARG00000003328"/>
</dbReference>
<dbReference type="GeneID" id="100320914"/>
<dbReference type="KEGG" id="dre:100320914"/>
<dbReference type="AGR" id="ZFIN:ZDB-GENE-081107-61"/>
<dbReference type="CTD" id="55719"/>
<dbReference type="ZFIN" id="ZDB-GENE-081107-61">
    <property type="gene designation" value="slf2"/>
</dbReference>
<dbReference type="eggNOG" id="ENOG502QW1I">
    <property type="taxonomic scope" value="Eukaryota"/>
</dbReference>
<dbReference type="OMA" id="REHCVIS"/>
<dbReference type="OrthoDB" id="6158547at2759"/>
<dbReference type="PRO" id="PR:F1QB81"/>
<dbReference type="Proteomes" id="UP000000437">
    <property type="component" value="Chromosome 13"/>
</dbReference>
<dbReference type="Bgee" id="ENSDARG00000003328">
    <property type="expression patterns" value="Expressed in testis and 21 other cell types or tissues"/>
</dbReference>
<dbReference type="ExpressionAtlas" id="F1QB81">
    <property type="expression patterns" value="baseline"/>
</dbReference>
<dbReference type="GO" id="GO:0005634">
    <property type="term" value="C:nucleus"/>
    <property type="evidence" value="ECO:0007669"/>
    <property type="project" value="UniProtKB-SubCell"/>
</dbReference>
<dbReference type="GO" id="GO:0006281">
    <property type="term" value="P:DNA repair"/>
    <property type="evidence" value="ECO:0007669"/>
    <property type="project" value="UniProtKB-KW"/>
</dbReference>
<dbReference type="InterPro" id="IPR044276">
    <property type="entry name" value="CANIN_dom"/>
</dbReference>
<dbReference type="InterPro" id="IPR026161">
    <property type="entry name" value="FAM178"/>
</dbReference>
<dbReference type="PANTHER" id="PTHR16046">
    <property type="entry name" value="SMC5-SMC6 COMPLEX LOCALIZATION FACTOR 2"/>
    <property type="match status" value="1"/>
</dbReference>
<dbReference type="PANTHER" id="PTHR16046:SF9">
    <property type="entry name" value="SMC5-SMC6 COMPLEX LOCALIZATION FACTOR PROTEIN 2"/>
    <property type="match status" value="1"/>
</dbReference>
<dbReference type="Pfam" id="PF14816">
    <property type="entry name" value="CANIN"/>
    <property type="match status" value="1"/>
</dbReference>
<accession>F1QB81</accession>
<accession>A0A8M2B2Q9</accession>
<accession>F1R8S6</accession>
<reference key="1">
    <citation type="journal article" date="2013" name="Nature">
        <title>The zebrafish reference genome sequence and its relationship to the human genome.</title>
        <authorList>
            <person name="Howe K."/>
            <person name="Clark M.D."/>
            <person name="Torroja C.F."/>
            <person name="Torrance J."/>
            <person name="Berthelot C."/>
            <person name="Muffato M."/>
            <person name="Collins J.E."/>
            <person name="Humphray S."/>
            <person name="McLaren K."/>
            <person name="Matthews L."/>
            <person name="McLaren S."/>
            <person name="Sealy I."/>
            <person name="Caccamo M."/>
            <person name="Churcher C."/>
            <person name="Scott C."/>
            <person name="Barrett J.C."/>
            <person name="Koch R."/>
            <person name="Rauch G.J."/>
            <person name="White S."/>
            <person name="Chow W."/>
            <person name="Kilian B."/>
            <person name="Quintais L.T."/>
            <person name="Guerra-Assuncao J.A."/>
            <person name="Zhou Y."/>
            <person name="Gu Y."/>
            <person name="Yen J."/>
            <person name="Vogel J.H."/>
            <person name="Eyre T."/>
            <person name="Redmond S."/>
            <person name="Banerjee R."/>
            <person name="Chi J."/>
            <person name="Fu B."/>
            <person name="Langley E."/>
            <person name="Maguire S.F."/>
            <person name="Laird G.K."/>
            <person name="Lloyd D."/>
            <person name="Kenyon E."/>
            <person name="Donaldson S."/>
            <person name="Sehra H."/>
            <person name="Almeida-King J."/>
            <person name="Loveland J."/>
            <person name="Trevanion S."/>
            <person name="Jones M."/>
            <person name="Quail M."/>
            <person name="Willey D."/>
            <person name="Hunt A."/>
            <person name="Burton J."/>
            <person name="Sims S."/>
            <person name="McLay K."/>
            <person name="Plumb B."/>
            <person name="Davis J."/>
            <person name="Clee C."/>
            <person name="Oliver K."/>
            <person name="Clark R."/>
            <person name="Riddle C."/>
            <person name="Elliot D."/>
            <person name="Threadgold G."/>
            <person name="Harden G."/>
            <person name="Ware D."/>
            <person name="Begum S."/>
            <person name="Mortimore B."/>
            <person name="Kerry G."/>
            <person name="Heath P."/>
            <person name="Phillimore B."/>
            <person name="Tracey A."/>
            <person name="Corby N."/>
            <person name="Dunn M."/>
            <person name="Johnson C."/>
            <person name="Wood J."/>
            <person name="Clark S."/>
            <person name="Pelan S."/>
            <person name="Griffiths G."/>
            <person name="Smith M."/>
            <person name="Glithero R."/>
            <person name="Howden P."/>
            <person name="Barker N."/>
            <person name="Lloyd C."/>
            <person name="Stevens C."/>
            <person name="Harley J."/>
            <person name="Holt K."/>
            <person name="Panagiotidis G."/>
            <person name="Lovell J."/>
            <person name="Beasley H."/>
            <person name="Henderson C."/>
            <person name="Gordon D."/>
            <person name="Auger K."/>
            <person name="Wright D."/>
            <person name="Collins J."/>
            <person name="Raisen C."/>
            <person name="Dyer L."/>
            <person name="Leung K."/>
            <person name="Robertson L."/>
            <person name="Ambridge K."/>
            <person name="Leongamornlert D."/>
            <person name="McGuire S."/>
            <person name="Gilderthorp R."/>
            <person name="Griffiths C."/>
            <person name="Manthravadi D."/>
            <person name="Nichol S."/>
            <person name="Barker G."/>
            <person name="Whitehead S."/>
            <person name="Kay M."/>
            <person name="Brown J."/>
            <person name="Murnane C."/>
            <person name="Gray E."/>
            <person name="Humphries M."/>
            <person name="Sycamore N."/>
            <person name="Barker D."/>
            <person name="Saunders D."/>
            <person name="Wallis J."/>
            <person name="Babbage A."/>
            <person name="Hammond S."/>
            <person name="Mashreghi-Mohammadi M."/>
            <person name="Barr L."/>
            <person name="Martin S."/>
            <person name="Wray P."/>
            <person name="Ellington A."/>
            <person name="Matthews N."/>
            <person name="Ellwood M."/>
            <person name="Woodmansey R."/>
            <person name="Clark G."/>
            <person name="Cooper J."/>
            <person name="Tromans A."/>
            <person name="Grafham D."/>
            <person name="Skuce C."/>
            <person name="Pandian R."/>
            <person name="Andrews R."/>
            <person name="Harrison E."/>
            <person name="Kimberley A."/>
            <person name="Garnett J."/>
            <person name="Fosker N."/>
            <person name="Hall R."/>
            <person name="Garner P."/>
            <person name="Kelly D."/>
            <person name="Bird C."/>
            <person name="Palmer S."/>
            <person name="Gehring I."/>
            <person name="Berger A."/>
            <person name="Dooley C.M."/>
            <person name="Ersan-Urun Z."/>
            <person name="Eser C."/>
            <person name="Geiger H."/>
            <person name="Geisler M."/>
            <person name="Karotki L."/>
            <person name="Kirn A."/>
            <person name="Konantz J."/>
            <person name="Konantz M."/>
            <person name="Oberlander M."/>
            <person name="Rudolph-Geiger S."/>
            <person name="Teucke M."/>
            <person name="Lanz C."/>
            <person name="Raddatz G."/>
            <person name="Osoegawa K."/>
            <person name="Zhu B."/>
            <person name="Rapp A."/>
            <person name="Widaa S."/>
            <person name="Langford C."/>
            <person name="Yang F."/>
            <person name="Schuster S.C."/>
            <person name="Carter N.P."/>
            <person name="Harrow J."/>
            <person name="Ning Z."/>
            <person name="Herrero J."/>
            <person name="Searle S.M."/>
            <person name="Enright A."/>
            <person name="Geisler R."/>
            <person name="Plasterk R.H."/>
            <person name="Lee C."/>
            <person name="Westerfield M."/>
            <person name="de Jong P.J."/>
            <person name="Zon L.I."/>
            <person name="Postlethwait J.H."/>
            <person name="Nusslein-Volhard C."/>
            <person name="Hubbard T.J."/>
            <person name="Roest Crollius H."/>
            <person name="Rogers J."/>
            <person name="Stemple D.L."/>
        </authorList>
    </citation>
    <scope>NUCLEOTIDE SEQUENCE [LARGE SCALE GENOMIC DNA]</scope>
    <source>
        <strain>Tuebingen</strain>
    </source>
</reference>
<reference key="2">
    <citation type="journal article" date="2022" name="Nat. Commun.">
        <title>Pathogenic variants in SLF2 and SMC5 cause segmented chromosomes and mosaic variegated hyperploidy.</title>
        <authorList>
            <person name="Grange L.J."/>
            <person name="Reynolds J.J."/>
            <person name="Ullah F."/>
            <person name="Isidor B."/>
            <person name="Shearer R.F."/>
            <person name="Latypova X."/>
            <person name="Baxley R.M."/>
            <person name="Oliver A.W."/>
            <person name="Ganesh A."/>
            <person name="Cooke S.L."/>
            <person name="Jhujh S.S."/>
            <person name="McNee G.S."/>
            <person name="Hollingworth R."/>
            <person name="Higgs M.R."/>
            <person name="Natsume T."/>
            <person name="Khan T."/>
            <person name="Martos-Moreno G.A."/>
            <person name="Chupp S."/>
            <person name="Mathew C.G."/>
            <person name="Parry D."/>
            <person name="Simpson M.A."/>
            <person name="Nahavandi N."/>
            <person name="Yueksel Z."/>
            <person name="Drasdo M."/>
            <person name="Kron A."/>
            <person name="Vogt P."/>
            <person name="Jonasson A."/>
            <person name="Seth S.A."/>
            <person name="Gonzaga-Jauregui C."/>
            <person name="Brigatti K.W."/>
            <person name="Stegmann A.P.A."/>
            <person name="Kanemaki M."/>
            <person name="Josifova D."/>
            <person name="Uchiyama Y."/>
            <person name="Oh Y."/>
            <person name="Morimoto A."/>
            <person name="Osaka H."/>
            <person name="Ammous Z."/>
            <person name="Argente J."/>
            <person name="Matsumoto N."/>
            <person name="Stumpel C.T.R.M."/>
            <person name="Taylor A.M.R."/>
            <person name="Jackson A.P."/>
            <person name="Bielinsky A.K."/>
            <person name="Mailand N."/>
            <person name="Le Caignec C."/>
            <person name="Davis E.E."/>
            <person name="Stewart G.S."/>
        </authorList>
    </citation>
    <scope>DISRUPTION PHENOTYPE</scope>
</reference>
<feature type="chain" id="PRO_0000458072" description="SMC5-SMC6 complex localization factor protein 2">
    <location>
        <begin position="1"/>
        <end position="1129"/>
    </location>
</feature>
<feature type="region of interest" description="Disordered" evidence="2">
    <location>
        <begin position="71"/>
        <end position="178"/>
    </location>
</feature>
<feature type="region of interest" description="Disordered" evidence="2">
    <location>
        <begin position="312"/>
        <end position="343"/>
    </location>
</feature>
<feature type="region of interest" description="Disordered" evidence="2">
    <location>
        <begin position="955"/>
        <end position="1057"/>
    </location>
</feature>
<feature type="compositionally biased region" description="Basic residues" evidence="2">
    <location>
        <begin position="72"/>
        <end position="87"/>
    </location>
</feature>
<feature type="compositionally biased region" description="Polar residues" evidence="2">
    <location>
        <begin position="93"/>
        <end position="110"/>
    </location>
</feature>
<feature type="compositionally biased region" description="Basic and acidic residues" evidence="2">
    <location>
        <begin position="112"/>
        <end position="130"/>
    </location>
</feature>
<feature type="compositionally biased region" description="Basic and acidic residues" evidence="2">
    <location>
        <begin position="149"/>
        <end position="166"/>
    </location>
</feature>
<feature type="compositionally biased region" description="Polar residues" evidence="2">
    <location>
        <begin position="169"/>
        <end position="178"/>
    </location>
</feature>
<feature type="compositionally biased region" description="Polar residues" evidence="2">
    <location>
        <begin position="324"/>
        <end position="343"/>
    </location>
</feature>
<feature type="compositionally biased region" description="Acidic residues" evidence="2">
    <location>
        <begin position="999"/>
        <end position="1014"/>
    </location>
</feature>
<feature type="compositionally biased region" description="Acidic residues" evidence="2">
    <location>
        <begin position="1033"/>
        <end position="1048"/>
    </location>
</feature>
<protein>
    <recommendedName>
        <fullName evidence="4">SMC5-SMC6 complex localization factor protein 2</fullName>
    </recommendedName>
</protein>
<keyword id="KW-0227">DNA damage</keyword>
<keyword id="KW-0234">DNA repair</keyword>
<keyword id="KW-0539">Nucleus</keyword>
<keyword id="KW-1185">Reference proteome</keyword>